<evidence type="ECO:0000255" key="1">
    <source>
        <dbReference type="HAMAP-Rule" id="MF_01443"/>
    </source>
</evidence>
<sequence length="246" mass="28227">MKYDIIGDIHGCLQEFQNLTEKLGYNWSSGLPIHPDQRKLAFVGDITDRGPHSLRMIEIVWELVIHKKVAYYAPGNHCNKLYRFFLGRNVTIAHGLETTVAEYEALPSHKQNMIKEKFITLYEQSPLYHVLDEKRLLVCHAGIRQDYIGRQDKKVQTFVLYGDITGEKHADGSPVRRDWAKEYKGTTWIVYGHTPVKEPRFVNHTVNIDTGAVFGGKLTGLRYPEMETVSVPSSLPFVPEKFRPIS</sequence>
<feature type="chain" id="PRO_0000297702" description="Bis(5'-nucleosyl)-tetraphosphatase PrpE [asymmetrical]">
    <location>
        <begin position="1"/>
        <end position="246"/>
    </location>
</feature>
<reference key="1">
    <citation type="journal article" date="2006" name="J. Bacteriol.">
        <title>Pathogenomic sequence analysis of Bacillus cereus and Bacillus thuringiensis isolates closely related to Bacillus anthracis.</title>
        <authorList>
            <person name="Han C.S."/>
            <person name="Xie G."/>
            <person name="Challacombe J.F."/>
            <person name="Altherr M.R."/>
            <person name="Bhotika S.S."/>
            <person name="Bruce D."/>
            <person name="Campbell C.S."/>
            <person name="Campbell M.L."/>
            <person name="Chen J."/>
            <person name="Chertkov O."/>
            <person name="Cleland C."/>
            <person name="Dimitrijevic M."/>
            <person name="Doggett N.A."/>
            <person name="Fawcett J.J."/>
            <person name="Glavina T."/>
            <person name="Goodwin L.A."/>
            <person name="Hill K.K."/>
            <person name="Hitchcock P."/>
            <person name="Jackson P.J."/>
            <person name="Keim P."/>
            <person name="Kewalramani A.R."/>
            <person name="Longmire J."/>
            <person name="Lucas S."/>
            <person name="Malfatti S."/>
            <person name="McMurry K."/>
            <person name="Meincke L.J."/>
            <person name="Misra M."/>
            <person name="Moseman B.L."/>
            <person name="Mundt M."/>
            <person name="Munk A.C."/>
            <person name="Okinaka R.T."/>
            <person name="Parson-Quintana B."/>
            <person name="Reilly L.P."/>
            <person name="Richardson P."/>
            <person name="Robinson D.L."/>
            <person name="Rubin E."/>
            <person name="Saunders E."/>
            <person name="Tapia R."/>
            <person name="Tesmer J.G."/>
            <person name="Thayer N."/>
            <person name="Thompson L.S."/>
            <person name="Tice H."/>
            <person name="Ticknor L.O."/>
            <person name="Wills P.L."/>
            <person name="Brettin T.S."/>
            <person name="Gilna P."/>
        </authorList>
    </citation>
    <scope>NUCLEOTIDE SEQUENCE [LARGE SCALE GENOMIC DNA]</scope>
    <source>
        <strain>97-27</strain>
    </source>
</reference>
<name>PRPE_BACHK</name>
<organism>
    <name type="scientific">Bacillus thuringiensis subsp. konkukian (strain 97-27)</name>
    <dbReference type="NCBI Taxonomy" id="281309"/>
    <lineage>
        <taxon>Bacteria</taxon>
        <taxon>Bacillati</taxon>
        <taxon>Bacillota</taxon>
        <taxon>Bacilli</taxon>
        <taxon>Bacillales</taxon>
        <taxon>Bacillaceae</taxon>
        <taxon>Bacillus</taxon>
        <taxon>Bacillus cereus group</taxon>
    </lineage>
</organism>
<proteinExistence type="inferred from homology"/>
<dbReference type="EC" id="3.6.1.17" evidence="1"/>
<dbReference type="EMBL" id="AE017355">
    <property type="protein sequence ID" value="AAT59336.1"/>
    <property type="molecule type" value="Genomic_DNA"/>
</dbReference>
<dbReference type="RefSeq" id="WP_000872716.1">
    <property type="nucleotide sequence ID" value="NC_005957.1"/>
</dbReference>
<dbReference type="RefSeq" id="YP_035442.1">
    <property type="nucleotide sequence ID" value="NC_005957.1"/>
</dbReference>
<dbReference type="SMR" id="Q6HLX9"/>
<dbReference type="KEGG" id="btk:BT9727_1105"/>
<dbReference type="PATRIC" id="fig|281309.8.peg.1164"/>
<dbReference type="HOGENOM" id="CLU_023125_3_0_9"/>
<dbReference type="Proteomes" id="UP000001301">
    <property type="component" value="Chromosome"/>
</dbReference>
<dbReference type="GO" id="GO:0005737">
    <property type="term" value="C:cytoplasm"/>
    <property type="evidence" value="ECO:0007669"/>
    <property type="project" value="TreeGrafter"/>
</dbReference>
<dbReference type="GO" id="GO:0004081">
    <property type="term" value="F:bis(5'-nucleosyl)-tetraphosphatase (asymmetrical) activity"/>
    <property type="evidence" value="ECO:0007669"/>
    <property type="project" value="UniProtKB-UniRule"/>
</dbReference>
<dbReference type="GO" id="GO:0005525">
    <property type="term" value="F:GTP binding"/>
    <property type="evidence" value="ECO:0007669"/>
    <property type="project" value="UniProtKB-KW"/>
</dbReference>
<dbReference type="GO" id="GO:0016151">
    <property type="term" value="F:nickel cation binding"/>
    <property type="evidence" value="ECO:0007669"/>
    <property type="project" value="UniProtKB-UniRule"/>
</dbReference>
<dbReference type="GO" id="GO:0016791">
    <property type="term" value="F:phosphatase activity"/>
    <property type="evidence" value="ECO:0007669"/>
    <property type="project" value="TreeGrafter"/>
</dbReference>
<dbReference type="CDD" id="cd07423">
    <property type="entry name" value="MPP_Prp_like"/>
    <property type="match status" value="1"/>
</dbReference>
<dbReference type="Gene3D" id="3.60.21.10">
    <property type="match status" value="1"/>
</dbReference>
<dbReference type="HAMAP" id="MF_01443">
    <property type="entry name" value="PrpE"/>
    <property type="match status" value="1"/>
</dbReference>
<dbReference type="InterPro" id="IPR050126">
    <property type="entry name" value="Ap4A_hydrolase"/>
</dbReference>
<dbReference type="InterPro" id="IPR023937">
    <property type="entry name" value="Bis(5'-nucleosyl)-tetraP_PrpE"/>
</dbReference>
<dbReference type="InterPro" id="IPR004843">
    <property type="entry name" value="Calcineurin-like_PHP_ApaH"/>
</dbReference>
<dbReference type="InterPro" id="IPR029052">
    <property type="entry name" value="Metallo-depent_PP-like"/>
</dbReference>
<dbReference type="InterPro" id="IPR041780">
    <property type="entry name" value="MPP_PrpE-like"/>
</dbReference>
<dbReference type="NCBIfam" id="NF010148">
    <property type="entry name" value="PRK13625.1"/>
    <property type="match status" value="1"/>
</dbReference>
<dbReference type="PANTHER" id="PTHR42850:SF7">
    <property type="entry name" value="BIS(5'-NUCLEOSYL)-TETRAPHOSPHATASE PRPE [ASYMMETRICAL]"/>
    <property type="match status" value="1"/>
</dbReference>
<dbReference type="PANTHER" id="PTHR42850">
    <property type="entry name" value="METALLOPHOSPHOESTERASE"/>
    <property type="match status" value="1"/>
</dbReference>
<dbReference type="Pfam" id="PF00149">
    <property type="entry name" value="Metallophos"/>
    <property type="match status" value="1"/>
</dbReference>
<dbReference type="SUPFAM" id="SSF56300">
    <property type="entry name" value="Metallo-dependent phosphatases"/>
    <property type="match status" value="1"/>
</dbReference>
<comment type="function">
    <text evidence="1">Asymmetrically hydrolyzes Ap4p to yield AMP and ATP.</text>
</comment>
<comment type="catalytic activity">
    <reaction evidence="1">
        <text>P(1),P(4)-bis(5'-guanosyl) tetraphosphate + H2O = GMP + GTP + 2 H(+)</text>
        <dbReference type="Rhea" id="RHEA:22484"/>
        <dbReference type="ChEBI" id="CHEBI:15377"/>
        <dbReference type="ChEBI" id="CHEBI:15378"/>
        <dbReference type="ChEBI" id="CHEBI:37565"/>
        <dbReference type="ChEBI" id="CHEBI:57553"/>
        <dbReference type="ChEBI" id="CHEBI:58115"/>
        <dbReference type="EC" id="3.6.1.17"/>
    </reaction>
</comment>
<comment type="cofactor">
    <cofactor evidence="1">
        <name>Ni(2+)</name>
        <dbReference type="ChEBI" id="CHEBI:49786"/>
    </cofactor>
</comment>
<comment type="similarity">
    <text evidence="1">Belongs to the PrpE family.</text>
</comment>
<keyword id="KW-0342">GTP-binding</keyword>
<keyword id="KW-0378">Hydrolase</keyword>
<keyword id="KW-0533">Nickel</keyword>
<keyword id="KW-0547">Nucleotide-binding</keyword>
<gene>
    <name evidence="1" type="primary">prpE</name>
    <name type="ordered locus">BT9727_1105</name>
</gene>
<accession>Q6HLX9</accession>
<protein>
    <recommendedName>
        <fullName evidence="1">Bis(5'-nucleosyl)-tetraphosphatase PrpE [asymmetrical]</fullName>
        <ecNumber evidence="1">3.6.1.17</ecNumber>
    </recommendedName>
    <alternativeName>
        <fullName evidence="1">Ap4A hydrolase</fullName>
    </alternativeName>
    <alternativeName>
        <fullName evidence="1">Diadenosine 5',5'''-P1,P4-tetraphosphate asymmetrical hydrolase</fullName>
        <shortName evidence="1">Diadenosine tetraphosphatase</shortName>
    </alternativeName>
</protein>